<proteinExistence type="inferred from homology"/>
<dbReference type="EC" id="1.14.99.60" evidence="1"/>
<dbReference type="EMBL" id="CP000440">
    <property type="protein sequence ID" value="ABI86012.1"/>
    <property type="molecule type" value="Genomic_DNA"/>
</dbReference>
<dbReference type="RefSeq" id="WP_011655885.1">
    <property type="nucleotide sequence ID" value="NC_008390.1"/>
</dbReference>
<dbReference type="SMR" id="Q0BIL1"/>
<dbReference type="GeneID" id="93084130"/>
<dbReference type="KEGG" id="bam:Bamb_0453"/>
<dbReference type="PATRIC" id="fig|339670.21.peg.1153"/>
<dbReference type="eggNOG" id="COG2941">
    <property type="taxonomic scope" value="Bacteria"/>
</dbReference>
<dbReference type="UniPathway" id="UPA00232"/>
<dbReference type="Proteomes" id="UP000000662">
    <property type="component" value="Chromosome 1"/>
</dbReference>
<dbReference type="GO" id="GO:0005886">
    <property type="term" value="C:plasma membrane"/>
    <property type="evidence" value="ECO:0007669"/>
    <property type="project" value="UniProtKB-SubCell"/>
</dbReference>
<dbReference type="GO" id="GO:0008682">
    <property type="term" value="F:3-demethoxyubiquinol 3-hydroxylase activity"/>
    <property type="evidence" value="ECO:0007669"/>
    <property type="project" value="UniProtKB-EC"/>
</dbReference>
<dbReference type="GO" id="GO:0046872">
    <property type="term" value="F:metal ion binding"/>
    <property type="evidence" value="ECO:0007669"/>
    <property type="project" value="UniProtKB-KW"/>
</dbReference>
<dbReference type="GO" id="GO:0006744">
    <property type="term" value="P:ubiquinone biosynthetic process"/>
    <property type="evidence" value="ECO:0007669"/>
    <property type="project" value="UniProtKB-UniRule"/>
</dbReference>
<dbReference type="CDD" id="cd01042">
    <property type="entry name" value="DMQH"/>
    <property type="match status" value="1"/>
</dbReference>
<dbReference type="Gene3D" id="1.20.1260.10">
    <property type="match status" value="1"/>
</dbReference>
<dbReference type="HAMAP" id="MF_01658">
    <property type="entry name" value="COQ7"/>
    <property type="match status" value="1"/>
</dbReference>
<dbReference type="InterPro" id="IPR047809">
    <property type="entry name" value="COQ7_proteobact"/>
</dbReference>
<dbReference type="InterPro" id="IPR012347">
    <property type="entry name" value="Ferritin-like"/>
</dbReference>
<dbReference type="InterPro" id="IPR009078">
    <property type="entry name" value="Ferritin-like_SF"/>
</dbReference>
<dbReference type="InterPro" id="IPR011566">
    <property type="entry name" value="Ubq_synth_Coq7"/>
</dbReference>
<dbReference type="NCBIfam" id="NF033656">
    <property type="entry name" value="DMQ_monoox_COQ7"/>
    <property type="match status" value="1"/>
</dbReference>
<dbReference type="PANTHER" id="PTHR11237:SF4">
    <property type="entry name" value="5-DEMETHOXYUBIQUINONE HYDROXYLASE, MITOCHONDRIAL"/>
    <property type="match status" value="1"/>
</dbReference>
<dbReference type="PANTHER" id="PTHR11237">
    <property type="entry name" value="COENZYME Q10 BIOSYNTHESIS PROTEIN 7"/>
    <property type="match status" value="1"/>
</dbReference>
<dbReference type="Pfam" id="PF03232">
    <property type="entry name" value="COQ7"/>
    <property type="match status" value="1"/>
</dbReference>
<dbReference type="SUPFAM" id="SSF47240">
    <property type="entry name" value="Ferritin-like"/>
    <property type="match status" value="1"/>
</dbReference>
<evidence type="ECO:0000255" key="1">
    <source>
        <dbReference type="HAMAP-Rule" id="MF_01658"/>
    </source>
</evidence>
<protein>
    <recommendedName>
        <fullName evidence="1">3-demethoxyubiquinol 3-hydroxylase</fullName>
        <shortName evidence="1">DMQ hydroxylase</shortName>
        <ecNumber evidence="1">1.14.99.60</ecNumber>
    </recommendedName>
    <alternativeName>
        <fullName evidence="1">2-nonaprenyl-3-methyl-6-methoxy-1,4-benzoquinol hydroxylase</fullName>
    </alternativeName>
</protein>
<comment type="function">
    <text evidence="1">Catalyzes the hydroxylation of 2-nonaprenyl-3-methyl-6-methoxy-1,4-benzoquinol during ubiquinone biosynthesis.</text>
</comment>
<comment type="catalytic activity">
    <reaction evidence="1">
        <text>a 5-methoxy-2-methyl-3-(all-trans-polyprenyl)benzene-1,4-diol + AH2 + O2 = a 3-demethylubiquinol + A + H2O</text>
        <dbReference type="Rhea" id="RHEA:50908"/>
        <dbReference type="Rhea" id="RHEA-COMP:10859"/>
        <dbReference type="Rhea" id="RHEA-COMP:10914"/>
        <dbReference type="ChEBI" id="CHEBI:13193"/>
        <dbReference type="ChEBI" id="CHEBI:15377"/>
        <dbReference type="ChEBI" id="CHEBI:15379"/>
        <dbReference type="ChEBI" id="CHEBI:17499"/>
        <dbReference type="ChEBI" id="CHEBI:84167"/>
        <dbReference type="ChEBI" id="CHEBI:84422"/>
        <dbReference type="EC" id="1.14.99.60"/>
    </reaction>
</comment>
<comment type="cofactor">
    <cofactor evidence="1">
        <name>Fe cation</name>
        <dbReference type="ChEBI" id="CHEBI:24875"/>
    </cofactor>
    <text evidence="1">Binds 2 iron ions per subunit.</text>
</comment>
<comment type="pathway">
    <text evidence="1">Cofactor biosynthesis; ubiquinone biosynthesis.</text>
</comment>
<comment type="subcellular location">
    <subcellularLocation>
        <location evidence="1">Cell membrane</location>
        <topology evidence="1">Peripheral membrane protein</topology>
    </subcellularLocation>
</comment>
<comment type="similarity">
    <text evidence="1">Belongs to the COQ7 family.</text>
</comment>
<accession>Q0BIL1</accession>
<keyword id="KW-1003">Cell membrane</keyword>
<keyword id="KW-0408">Iron</keyword>
<keyword id="KW-0472">Membrane</keyword>
<keyword id="KW-0479">Metal-binding</keyword>
<keyword id="KW-0503">Monooxygenase</keyword>
<keyword id="KW-0560">Oxidoreductase</keyword>
<keyword id="KW-0831">Ubiquinone biosynthesis</keyword>
<gene>
    <name evidence="1" type="primary">coq7</name>
    <name type="ordered locus">Bamb_0453</name>
</gene>
<organism>
    <name type="scientific">Burkholderia ambifaria (strain ATCC BAA-244 / DSM 16087 / CCUG 44356 / LMG 19182 / AMMD)</name>
    <name type="common">Burkholderia cepacia (strain AMMD)</name>
    <dbReference type="NCBI Taxonomy" id="339670"/>
    <lineage>
        <taxon>Bacteria</taxon>
        <taxon>Pseudomonadati</taxon>
        <taxon>Pseudomonadota</taxon>
        <taxon>Betaproteobacteria</taxon>
        <taxon>Burkholderiales</taxon>
        <taxon>Burkholderiaceae</taxon>
        <taxon>Burkholderia</taxon>
        <taxon>Burkholderia cepacia complex</taxon>
    </lineage>
</organism>
<feature type="chain" id="PRO_0000338662" description="3-demethoxyubiquinol 3-hydroxylase">
    <location>
        <begin position="1"/>
        <end position="208"/>
    </location>
</feature>
<feature type="binding site" evidence="1">
    <location>
        <position position="57"/>
    </location>
    <ligand>
        <name>Fe cation</name>
        <dbReference type="ChEBI" id="CHEBI:24875"/>
        <label>1</label>
    </ligand>
</feature>
<feature type="binding site" evidence="1">
    <location>
        <position position="87"/>
    </location>
    <ligand>
        <name>Fe cation</name>
        <dbReference type="ChEBI" id="CHEBI:24875"/>
        <label>1</label>
    </ligand>
</feature>
<feature type="binding site" evidence="1">
    <location>
        <position position="87"/>
    </location>
    <ligand>
        <name>Fe cation</name>
        <dbReference type="ChEBI" id="CHEBI:24875"/>
        <label>2</label>
    </ligand>
</feature>
<feature type="binding site" evidence="1">
    <location>
        <position position="90"/>
    </location>
    <ligand>
        <name>Fe cation</name>
        <dbReference type="ChEBI" id="CHEBI:24875"/>
        <label>1</label>
    </ligand>
</feature>
<feature type="binding site" evidence="1">
    <location>
        <position position="139"/>
    </location>
    <ligand>
        <name>Fe cation</name>
        <dbReference type="ChEBI" id="CHEBI:24875"/>
        <label>2</label>
    </ligand>
</feature>
<feature type="binding site" evidence="1">
    <location>
        <position position="171"/>
    </location>
    <ligand>
        <name>Fe cation</name>
        <dbReference type="ChEBI" id="CHEBI:24875"/>
        <label>1</label>
    </ligand>
</feature>
<feature type="binding site" evidence="1">
    <location>
        <position position="171"/>
    </location>
    <ligand>
        <name>Fe cation</name>
        <dbReference type="ChEBI" id="CHEBI:24875"/>
        <label>2</label>
    </ligand>
</feature>
<feature type="binding site" evidence="1">
    <location>
        <position position="174"/>
    </location>
    <ligand>
        <name>Fe cation</name>
        <dbReference type="ChEBI" id="CHEBI:24875"/>
        <label>2</label>
    </ligand>
</feature>
<name>COQ7_BURCM</name>
<reference key="1">
    <citation type="submission" date="2006-08" db="EMBL/GenBank/DDBJ databases">
        <title>Complete sequence of chromosome 1 of Burkholderia cepacia AMMD.</title>
        <authorList>
            <person name="Copeland A."/>
            <person name="Lucas S."/>
            <person name="Lapidus A."/>
            <person name="Barry K."/>
            <person name="Detter J.C."/>
            <person name="Glavina del Rio T."/>
            <person name="Hammon N."/>
            <person name="Israni S."/>
            <person name="Pitluck S."/>
            <person name="Bruce D."/>
            <person name="Chain P."/>
            <person name="Malfatti S."/>
            <person name="Shin M."/>
            <person name="Vergez L."/>
            <person name="Schmutz J."/>
            <person name="Larimer F."/>
            <person name="Land M."/>
            <person name="Hauser L."/>
            <person name="Kyrpides N."/>
            <person name="Kim E."/>
            <person name="Parke J."/>
            <person name="Coenye T."/>
            <person name="Konstantinidis K."/>
            <person name="Ramette A."/>
            <person name="Tiedje J."/>
            <person name="Richardson P."/>
        </authorList>
    </citation>
    <scope>NUCLEOTIDE SEQUENCE [LARGE SCALE GENOMIC DNA]</scope>
    <source>
        <strain>ATCC BAA-244 / DSM 16087 / CCUG 44356 / LMG 19182 / AMMD</strain>
    </source>
</reference>
<sequence>MVLDELISEFDRGLRSLTGISRMSRPVPVPAEPTVGELTPAERAHAAGLMRVNHVGEVCAQALYQAQKLTARSASSKAMFEEAAREEEDHLAWTAHRLKELDSRPSLLNPLWYAGALAIGVAAGTLGDKVSLGFMAETERQVESHLDGHLSELPATDTASRAIVEQMRVDEVKHGKAATDAGGIELPLPARMLMRAASKVMTRTAYYL</sequence>